<name>SEZ6_XENLA</name>
<proteinExistence type="evidence at transcript level"/>
<comment type="function">
    <text evidence="1">May play a role in cell-cell recognition and in neuronal membrane signaling.</text>
</comment>
<comment type="subcellular location">
    <subcellularLocation>
        <location evidence="1">Cell membrane</location>
        <topology evidence="1">Single-pass type I membrane protein</topology>
    </subcellularLocation>
</comment>
<comment type="similarity">
    <text evidence="6">Belongs to the SEZ6 family.</text>
</comment>
<keyword id="KW-1003">Cell membrane</keyword>
<keyword id="KW-1015">Disulfide bond</keyword>
<keyword id="KW-0325">Glycoprotein</keyword>
<keyword id="KW-0472">Membrane</keyword>
<keyword id="KW-1185">Reference proteome</keyword>
<keyword id="KW-0677">Repeat</keyword>
<keyword id="KW-0732">Signal</keyword>
<keyword id="KW-0768">Sushi</keyword>
<keyword id="KW-0812">Transmembrane</keyword>
<keyword id="KW-1133">Transmembrane helix</keyword>
<feature type="signal peptide" evidence="2">
    <location>
        <begin position="1"/>
        <end position="20"/>
    </location>
</feature>
<feature type="chain" id="PRO_0000341349" description="Seizure protein 6 homolog">
    <location>
        <begin position="21"/>
        <end position="900"/>
    </location>
</feature>
<feature type="transmembrane region" description="Helical" evidence="2">
    <location>
        <begin position="833"/>
        <end position="853"/>
    </location>
</feature>
<feature type="domain" description="CUB 1" evidence="3">
    <location>
        <begin position="151"/>
        <end position="259"/>
    </location>
</feature>
<feature type="domain" description="Sushi 1" evidence="4">
    <location>
        <begin position="261"/>
        <end position="320"/>
    </location>
</feature>
<feature type="domain" description="CUB 2" evidence="3">
    <location>
        <begin position="322"/>
        <end position="436"/>
    </location>
</feature>
<feature type="domain" description="Sushi 2" evidence="4">
    <location>
        <begin position="439"/>
        <end position="500"/>
    </location>
</feature>
<feature type="domain" description="CUB 3" evidence="3">
    <location>
        <begin position="502"/>
        <end position="613"/>
    </location>
</feature>
<feature type="domain" description="Sushi 3" evidence="4">
    <location>
        <begin position="617"/>
        <end position="676"/>
    </location>
</feature>
<feature type="domain" description="Sushi 4" evidence="4">
    <location>
        <begin position="678"/>
        <end position="741"/>
    </location>
</feature>
<feature type="domain" description="Sushi 5" evidence="4">
    <location>
        <begin position="744"/>
        <end position="805"/>
    </location>
</feature>
<feature type="region of interest" description="Disordered" evidence="5">
    <location>
        <begin position="111"/>
        <end position="130"/>
    </location>
</feature>
<feature type="compositionally biased region" description="Pro residues" evidence="5">
    <location>
        <begin position="113"/>
        <end position="125"/>
    </location>
</feature>
<feature type="glycosylation site" description="N-linked (GlcNAc...) asparagine" evidence="2">
    <location>
        <position position="154"/>
    </location>
</feature>
<feature type="glycosylation site" description="N-linked (GlcNAc...) asparagine" evidence="2">
    <location>
        <position position="198"/>
    </location>
</feature>
<feature type="glycosylation site" description="N-linked (GlcNAc...) asparagine" evidence="2">
    <location>
        <position position="220"/>
    </location>
</feature>
<feature type="glycosylation site" description="N-linked (GlcNAc...) asparagine" evidence="2">
    <location>
        <position position="305"/>
    </location>
</feature>
<feature type="glycosylation site" description="N-linked (GlcNAc...) asparagine" evidence="2">
    <location>
        <position position="328"/>
    </location>
</feature>
<feature type="glycosylation site" description="N-linked (GlcNAc...) asparagine" evidence="2">
    <location>
        <position position="350"/>
    </location>
</feature>
<feature type="glycosylation site" description="N-linked (GlcNAc...) asparagine" evidence="2">
    <location>
        <position position="450"/>
    </location>
</feature>
<feature type="glycosylation site" description="N-linked (GlcNAc...) asparagine" evidence="2">
    <location>
        <position position="492"/>
    </location>
</feature>
<feature type="glycosylation site" description="N-linked (GlcNAc...) asparagine" evidence="2">
    <location>
        <position position="616"/>
    </location>
</feature>
<feature type="disulfide bond" evidence="1">
    <location>
        <begin position="151"/>
        <end position="178"/>
    </location>
</feature>
<feature type="disulfide bond" evidence="1">
    <location>
        <begin position="263"/>
        <end position="303"/>
    </location>
</feature>
<feature type="disulfide bond" evidence="1">
    <location>
        <begin position="289"/>
        <end position="318"/>
    </location>
</feature>
<feature type="disulfide bond" evidence="1">
    <location>
        <begin position="322"/>
        <end position="353"/>
    </location>
</feature>
<feature type="disulfide bond" evidence="1">
    <location>
        <begin position="441"/>
        <end position="483"/>
    </location>
</feature>
<feature type="disulfide bond" evidence="1">
    <location>
        <begin position="468"/>
        <end position="498"/>
    </location>
</feature>
<feature type="disulfide bond" evidence="1">
    <location>
        <begin position="502"/>
        <end position="528"/>
    </location>
</feature>
<feature type="disulfide bond" evidence="1">
    <location>
        <begin position="619"/>
        <end position="661"/>
    </location>
</feature>
<feature type="disulfide bond" evidence="1">
    <location>
        <begin position="647"/>
        <end position="674"/>
    </location>
</feature>
<feature type="disulfide bond" evidence="1">
    <location>
        <begin position="680"/>
        <end position="722"/>
    </location>
</feature>
<feature type="disulfide bond" evidence="1">
    <location>
        <begin position="708"/>
        <end position="739"/>
    </location>
</feature>
<feature type="disulfide bond" evidence="1">
    <location>
        <begin position="746"/>
        <end position="788"/>
    </location>
</feature>
<feature type="disulfide bond" evidence="1">
    <location>
        <begin position="774"/>
        <end position="803"/>
    </location>
</feature>
<reference key="1">
    <citation type="submission" date="2004-08" db="EMBL/GenBank/DDBJ databases">
        <authorList>
            <consortium name="NIH - Xenopus Gene Collection (XGC) project"/>
        </authorList>
    </citation>
    <scope>NUCLEOTIDE SEQUENCE [LARGE SCALE MRNA]</scope>
    <source>
        <tissue>Eye</tissue>
    </source>
</reference>
<gene>
    <name type="primary">sez6</name>
</gene>
<organism>
    <name type="scientific">Xenopus laevis</name>
    <name type="common">African clawed frog</name>
    <dbReference type="NCBI Taxonomy" id="8355"/>
    <lineage>
        <taxon>Eukaryota</taxon>
        <taxon>Metazoa</taxon>
        <taxon>Chordata</taxon>
        <taxon>Craniata</taxon>
        <taxon>Vertebrata</taxon>
        <taxon>Euteleostomi</taxon>
        <taxon>Amphibia</taxon>
        <taxon>Batrachia</taxon>
        <taxon>Anura</taxon>
        <taxon>Pipoidea</taxon>
        <taxon>Pipidae</taxon>
        <taxon>Xenopodinae</taxon>
        <taxon>Xenopus</taxon>
        <taxon>Xenopus</taxon>
    </lineage>
</organism>
<dbReference type="EMBL" id="BC079770">
    <property type="protein sequence ID" value="AAH79770.1"/>
    <property type="molecule type" value="mRNA"/>
</dbReference>
<dbReference type="RefSeq" id="NP_001087427.1">
    <property type="nucleotide sequence ID" value="NM_001093958.1"/>
</dbReference>
<dbReference type="SMR" id="Q6AX42"/>
<dbReference type="GlyCosmos" id="Q6AX42">
    <property type="glycosylation" value="9 sites, No reported glycans"/>
</dbReference>
<dbReference type="DNASU" id="447251"/>
<dbReference type="GeneID" id="447251"/>
<dbReference type="KEGG" id="xla:447251"/>
<dbReference type="AGR" id="Xenbase:XB-GENE-921463"/>
<dbReference type="CTD" id="447251"/>
<dbReference type="Xenbase" id="XB-GENE-921463">
    <property type="gene designation" value="sez6l2.S"/>
</dbReference>
<dbReference type="OrthoDB" id="9935125at2759"/>
<dbReference type="Proteomes" id="UP000186698">
    <property type="component" value="Chromosome 9_10S"/>
</dbReference>
<dbReference type="Bgee" id="447251">
    <property type="expression patterns" value="Expressed in brain and 13 other cell types or tissues"/>
</dbReference>
<dbReference type="GO" id="GO:0005783">
    <property type="term" value="C:endoplasmic reticulum"/>
    <property type="evidence" value="ECO:0000318"/>
    <property type="project" value="GO_Central"/>
</dbReference>
<dbReference type="GO" id="GO:0043025">
    <property type="term" value="C:neuronal cell body"/>
    <property type="evidence" value="ECO:0000318"/>
    <property type="project" value="GO_Central"/>
</dbReference>
<dbReference type="GO" id="GO:0005886">
    <property type="term" value="C:plasma membrane"/>
    <property type="evidence" value="ECO:0007669"/>
    <property type="project" value="UniProtKB-SubCell"/>
</dbReference>
<dbReference type="GO" id="GO:0090036">
    <property type="term" value="P:regulation of protein kinase C signaling"/>
    <property type="evidence" value="ECO:0007669"/>
    <property type="project" value="TreeGrafter"/>
</dbReference>
<dbReference type="GO" id="GO:0060074">
    <property type="term" value="P:synapse maturation"/>
    <property type="evidence" value="ECO:0000318"/>
    <property type="project" value="GO_Central"/>
</dbReference>
<dbReference type="CDD" id="cd00033">
    <property type="entry name" value="CCP"/>
    <property type="match status" value="5"/>
</dbReference>
<dbReference type="CDD" id="cd00041">
    <property type="entry name" value="CUB"/>
    <property type="match status" value="2"/>
</dbReference>
<dbReference type="FunFam" id="2.10.70.10:FF:000009">
    <property type="entry name" value="Seizure related 6 homolog like"/>
    <property type="match status" value="1"/>
</dbReference>
<dbReference type="FunFam" id="2.10.70.10:FF:000010">
    <property type="entry name" value="Seizure related 6 homolog like"/>
    <property type="match status" value="1"/>
</dbReference>
<dbReference type="FunFam" id="2.10.70.10:FF:000012">
    <property type="entry name" value="Seizure related 6 homolog like"/>
    <property type="match status" value="1"/>
</dbReference>
<dbReference type="Gene3D" id="2.10.70.10">
    <property type="entry name" value="Complement Module, domain 1"/>
    <property type="match status" value="5"/>
</dbReference>
<dbReference type="Gene3D" id="2.60.120.290">
    <property type="entry name" value="Spermadhesin, CUB domain"/>
    <property type="match status" value="3"/>
</dbReference>
<dbReference type="InterPro" id="IPR000859">
    <property type="entry name" value="CUB_dom"/>
</dbReference>
<dbReference type="InterPro" id="IPR051277">
    <property type="entry name" value="SEZ6_CSMD_C4BPB_Regulators"/>
</dbReference>
<dbReference type="InterPro" id="IPR035914">
    <property type="entry name" value="Sperma_CUB_dom_sf"/>
</dbReference>
<dbReference type="InterPro" id="IPR035976">
    <property type="entry name" value="Sushi/SCR/CCP_sf"/>
</dbReference>
<dbReference type="InterPro" id="IPR000436">
    <property type="entry name" value="Sushi_SCR_CCP_dom"/>
</dbReference>
<dbReference type="PANTHER" id="PTHR45656">
    <property type="entry name" value="PROTEIN CBR-CLEC-78"/>
    <property type="match status" value="1"/>
</dbReference>
<dbReference type="PANTHER" id="PTHR45656:SF2">
    <property type="entry name" value="SEIZURE 6-LIKE PROTEIN 2"/>
    <property type="match status" value="1"/>
</dbReference>
<dbReference type="Pfam" id="PF00431">
    <property type="entry name" value="CUB"/>
    <property type="match status" value="2"/>
</dbReference>
<dbReference type="Pfam" id="PF00084">
    <property type="entry name" value="Sushi"/>
    <property type="match status" value="5"/>
</dbReference>
<dbReference type="SMART" id="SM00032">
    <property type="entry name" value="CCP"/>
    <property type="match status" value="5"/>
</dbReference>
<dbReference type="SMART" id="SM00042">
    <property type="entry name" value="CUB"/>
    <property type="match status" value="3"/>
</dbReference>
<dbReference type="SUPFAM" id="SSF57535">
    <property type="entry name" value="Complement control module/SCR domain"/>
    <property type="match status" value="5"/>
</dbReference>
<dbReference type="SUPFAM" id="SSF49854">
    <property type="entry name" value="Spermadhesin, CUB domain"/>
    <property type="match status" value="3"/>
</dbReference>
<dbReference type="PROSITE" id="PS01180">
    <property type="entry name" value="CUB"/>
    <property type="match status" value="3"/>
</dbReference>
<dbReference type="PROSITE" id="PS50923">
    <property type="entry name" value="SUSHI"/>
    <property type="match status" value="5"/>
</dbReference>
<sequence>MMPLAGIAWNLMLLFSAVQGLPLQDGEGTQHPDLLNNPPKGSVEPVALEQLVHQAILKKDFLAQDVFFPGTTAIPTRAAPISLTEGVSDASGVLTTAVGGAFSLPPQLSTLIPPSPAPTGGPGPSPEAEEETTTTLITTTTVTTVHSPVLCNNNISESEGLLEAPEYGGSTFFGGLDCTYSVSVYLGYGVEIRVERLNLSKEEALSIEGLEEDRRFLLANETLMAEGQVIRSPTNHVAVRFQTYRATSPGAFRLRYQAFVLSCVFPPRPENGEVTVTDLHPGGAANFRCSAGFTLKGGESLVCLNISRPEWSGKPPVCAASCGGVIRNATVGRIVSPDISTSHSNNHGNNLSCHWLIEAAEGQRLHLHFERVSLDEDNDRLVVRSGSSPLSPVIYDSDIDDVPERGLLSDAQSLYIELISDNPAVPLLLSLRYEVFSESRCYEPFLAHGNFTTTDPLYSPGSLVSFFCNAGYMLEQGPPVIECVDPADPHWNESEPVCKALCGGEISEPAGVILSPDWPQNYGKGQDCVWGIHVQEDRRVLLEIEILNIRRSDALTVYDGDDLTARVLGQYMGVHQRFNLFSSANDVTLQFQSDSNDPVFSLSQGFIIHFKEVPRNDTCPALPEVPNGWKTSSHPDLIRGTVVTYQCEPGYDISGSDILTCQWDLSWSNAPPTCEKILNCADPGEIANGVRRASDPRFPIGSHVQYSCNEGYTLEGSRTLTCYNRDTGTPKWSDRIPKCVLKYEPCLNPGVPENGYQTLYKHHYQAGEALRFFCYEGFELIGEVTITCAPGHPSQWTSQPPLCKVAYEELLDDRKLEVTQTTDPSHQMEGGNIALAIFLPIILVILLIGGIYIYYTKFQGKSLFGFSFPASHSYSPITVESDFNNPLYEAGDTREYEVSI</sequence>
<accession>Q6AX42</accession>
<evidence type="ECO:0000250" key="1"/>
<evidence type="ECO:0000255" key="2"/>
<evidence type="ECO:0000255" key="3">
    <source>
        <dbReference type="PROSITE-ProRule" id="PRU00059"/>
    </source>
</evidence>
<evidence type="ECO:0000255" key="4">
    <source>
        <dbReference type="PROSITE-ProRule" id="PRU00302"/>
    </source>
</evidence>
<evidence type="ECO:0000256" key="5">
    <source>
        <dbReference type="SAM" id="MobiDB-lite"/>
    </source>
</evidence>
<evidence type="ECO:0000305" key="6"/>
<protein>
    <recommendedName>
        <fullName>Seizure protein 6 homolog</fullName>
        <shortName>SEZ-6</shortName>
    </recommendedName>
</protein>